<keyword id="KW-0997">Cell inner membrane</keyword>
<keyword id="KW-1003">Cell membrane</keyword>
<keyword id="KW-0133">Cell shape</keyword>
<keyword id="KW-0961">Cell wall biogenesis/degradation</keyword>
<keyword id="KW-0328">Glycosyltransferase</keyword>
<keyword id="KW-0472">Membrane</keyword>
<keyword id="KW-0573">Peptidoglycan synthesis</keyword>
<keyword id="KW-1185">Reference proteome</keyword>
<keyword id="KW-0808">Transferase</keyword>
<keyword id="KW-0812">Transmembrane</keyword>
<keyword id="KW-1133">Transmembrane helix</keyword>
<feature type="chain" id="PRO_1000017298" description="Biosynthetic peptidoglycan transglycosylase">
    <location>
        <begin position="1"/>
        <end position="235"/>
    </location>
</feature>
<feature type="transmembrane region" description="Helical" evidence="1">
    <location>
        <begin position="12"/>
        <end position="34"/>
    </location>
</feature>
<dbReference type="EC" id="2.4.99.28" evidence="1"/>
<dbReference type="EMBL" id="CP000462">
    <property type="protein sequence ID" value="ABK38359.1"/>
    <property type="molecule type" value="Genomic_DNA"/>
</dbReference>
<dbReference type="RefSeq" id="WP_011705989.1">
    <property type="nucleotide sequence ID" value="NC_008570.1"/>
</dbReference>
<dbReference type="RefSeq" id="YP_856654.1">
    <property type="nucleotide sequence ID" value="NC_008570.1"/>
</dbReference>
<dbReference type="SMR" id="A0KK53"/>
<dbReference type="STRING" id="380703.AHA_2130"/>
<dbReference type="CAZy" id="GT51">
    <property type="family name" value="Glycosyltransferase Family 51"/>
</dbReference>
<dbReference type="EnsemblBacteria" id="ABK38359">
    <property type="protein sequence ID" value="ABK38359"/>
    <property type="gene ID" value="AHA_2130"/>
</dbReference>
<dbReference type="GeneID" id="4487631"/>
<dbReference type="KEGG" id="aha:AHA_2130"/>
<dbReference type="PATRIC" id="fig|380703.7.peg.2131"/>
<dbReference type="eggNOG" id="COG0744">
    <property type="taxonomic scope" value="Bacteria"/>
</dbReference>
<dbReference type="HOGENOM" id="CLU_006354_1_1_6"/>
<dbReference type="OrthoDB" id="9766909at2"/>
<dbReference type="UniPathway" id="UPA00219"/>
<dbReference type="Proteomes" id="UP000000756">
    <property type="component" value="Chromosome"/>
</dbReference>
<dbReference type="GO" id="GO:0009274">
    <property type="term" value="C:peptidoglycan-based cell wall"/>
    <property type="evidence" value="ECO:0007669"/>
    <property type="project" value="InterPro"/>
</dbReference>
<dbReference type="GO" id="GO:0005886">
    <property type="term" value="C:plasma membrane"/>
    <property type="evidence" value="ECO:0007669"/>
    <property type="project" value="UniProtKB-SubCell"/>
</dbReference>
<dbReference type="GO" id="GO:0016763">
    <property type="term" value="F:pentosyltransferase activity"/>
    <property type="evidence" value="ECO:0007669"/>
    <property type="project" value="InterPro"/>
</dbReference>
<dbReference type="GO" id="GO:0008955">
    <property type="term" value="F:peptidoglycan glycosyltransferase activity"/>
    <property type="evidence" value="ECO:0007669"/>
    <property type="project" value="UniProtKB-UniRule"/>
</dbReference>
<dbReference type="GO" id="GO:0071555">
    <property type="term" value="P:cell wall organization"/>
    <property type="evidence" value="ECO:0007669"/>
    <property type="project" value="UniProtKB-KW"/>
</dbReference>
<dbReference type="GO" id="GO:0009252">
    <property type="term" value="P:peptidoglycan biosynthetic process"/>
    <property type="evidence" value="ECO:0007669"/>
    <property type="project" value="UniProtKB-UniRule"/>
</dbReference>
<dbReference type="GO" id="GO:0008360">
    <property type="term" value="P:regulation of cell shape"/>
    <property type="evidence" value="ECO:0007669"/>
    <property type="project" value="UniProtKB-KW"/>
</dbReference>
<dbReference type="Gene3D" id="1.10.3810.10">
    <property type="entry name" value="Biosynthetic peptidoglycan transglycosylase-like"/>
    <property type="match status" value="1"/>
</dbReference>
<dbReference type="HAMAP" id="MF_00766">
    <property type="entry name" value="PGT_MtgA"/>
    <property type="match status" value="1"/>
</dbReference>
<dbReference type="InterPro" id="IPR001264">
    <property type="entry name" value="Glyco_trans_51"/>
</dbReference>
<dbReference type="InterPro" id="IPR023346">
    <property type="entry name" value="Lysozyme-like_dom_sf"/>
</dbReference>
<dbReference type="InterPro" id="IPR036950">
    <property type="entry name" value="PBP_transglycosylase"/>
</dbReference>
<dbReference type="InterPro" id="IPR011812">
    <property type="entry name" value="Pep_trsgly"/>
</dbReference>
<dbReference type="NCBIfam" id="TIGR02070">
    <property type="entry name" value="mono_pep_trsgly"/>
    <property type="match status" value="1"/>
</dbReference>
<dbReference type="PANTHER" id="PTHR30400:SF0">
    <property type="entry name" value="BIOSYNTHETIC PEPTIDOGLYCAN TRANSGLYCOSYLASE"/>
    <property type="match status" value="1"/>
</dbReference>
<dbReference type="PANTHER" id="PTHR30400">
    <property type="entry name" value="MONOFUNCTIONAL BIOSYNTHETIC PEPTIDOGLYCAN TRANSGLYCOSYLASE"/>
    <property type="match status" value="1"/>
</dbReference>
<dbReference type="Pfam" id="PF00912">
    <property type="entry name" value="Transgly"/>
    <property type="match status" value="1"/>
</dbReference>
<dbReference type="SUPFAM" id="SSF53955">
    <property type="entry name" value="Lysozyme-like"/>
    <property type="match status" value="1"/>
</dbReference>
<name>MTGA_AERHH</name>
<evidence type="ECO:0000255" key="1">
    <source>
        <dbReference type="HAMAP-Rule" id="MF_00766"/>
    </source>
</evidence>
<sequence length="235" mass="26801">MRPALARRLLSGLGKLLLAALLSTIVSVALLRFIDPPMWTWRLERALFPPAKVAEVKHDWVPLEQISRELQLAVIAAEDQRFAEHNGFDMDAISSALKHNQHSERVRGASTLSQQTAKNLFMWSDRSFLRKGIEAWFTLLMELGWDKSRILEMYLNIVEFGPGIYGAEAAARHYFGKPAARLTRYEASLLAAALPNPWRYRVKPPSPYVQQRSAWIRRQMGQLGQITLNKVHQAD</sequence>
<reference key="1">
    <citation type="journal article" date="2006" name="J. Bacteriol.">
        <title>Genome sequence of Aeromonas hydrophila ATCC 7966T: jack of all trades.</title>
        <authorList>
            <person name="Seshadri R."/>
            <person name="Joseph S.W."/>
            <person name="Chopra A.K."/>
            <person name="Sha J."/>
            <person name="Shaw J."/>
            <person name="Graf J."/>
            <person name="Haft D.H."/>
            <person name="Wu M."/>
            <person name="Ren Q."/>
            <person name="Rosovitz M.J."/>
            <person name="Madupu R."/>
            <person name="Tallon L."/>
            <person name="Kim M."/>
            <person name="Jin S."/>
            <person name="Vuong H."/>
            <person name="Stine O.C."/>
            <person name="Ali A."/>
            <person name="Horneman A.J."/>
            <person name="Heidelberg J.F."/>
        </authorList>
    </citation>
    <scope>NUCLEOTIDE SEQUENCE [LARGE SCALE GENOMIC DNA]</scope>
    <source>
        <strain>ATCC 7966 / DSM 30187 / BCRC 13018 / CCUG 14551 / JCM 1027 / KCTC 2358 / NCIMB 9240 / NCTC 8049</strain>
    </source>
</reference>
<protein>
    <recommendedName>
        <fullName evidence="1">Biosynthetic peptidoglycan transglycosylase</fullName>
        <ecNumber evidence="1">2.4.99.28</ecNumber>
    </recommendedName>
    <alternativeName>
        <fullName evidence="1">Glycan polymerase</fullName>
    </alternativeName>
    <alternativeName>
        <fullName evidence="1">Peptidoglycan glycosyltransferase MtgA</fullName>
        <shortName evidence="1">PGT</shortName>
    </alternativeName>
</protein>
<comment type="function">
    <text evidence="1">Peptidoglycan polymerase that catalyzes glycan chain elongation from lipid-linked precursors.</text>
</comment>
<comment type="catalytic activity">
    <reaction evidence="1">
        <text>[GlcNAc-(1-&gt;4)-Mur2Ac(oyl-L-Ala-gamma-D-Glu-L-Lys-D-Ala-D-Ala)](n)-di-trans,octa-cis-undecaprenyl diphosphate + beta-D-GlcNAc-(1-&gt;4)-Mur2Ac(oyl-L-Ala-gamma-D-Glu-L-Lys-D-Ala-D-Ala)-di-trans,octa-cis-undecaprenyl diphosphate = [GlcNAc-(1-&gt;4)-Mur2Ac(oyl-L-Ala-gamma-D-Glu-L-Lys-D-Ala-D-Ala)](n+1)-di-trans,octa-cis-undecaprenyl diphosphate + di-trans,octa-cis-undecaprenyl diphosphate + H(+)</text>
        <dbReference type="Rhea" id="RHEA:23708"/>
        <dbReference type="Rhea" id="RHEA-COMP:9602"/>
        <dbReference type="Rhea" id="RHEA-COMP:9603"/>
        <dbReference type="ChEBI" id="CHEBI:15378"/>
        <dbReference type="ChEBI" id="CHEBI:58405"/>
        <dbReference type="ChEBI" id="CHEBI:60033"/>
        <dbReference type="ChEBI" id="CHEBI:78435"/>
        <dbReference type="EC" id="2.4.99.28"/>
    </reaction>
</comment>
<comment type="pathway">
    <text evidence="1">Cell wall biogenesis; peptidoglycan biosynthesis.</text>
</comment>
<comment type="subcellular location">
    <subcellularLocation>
        <location evidence="1">Cell inner membrane</location>
        <topology evidence="1">Single-pass membrane protein</topology>
    </subcellularLocation>
</comment>
<comment type="similarity">
    <text evidence="1">Belongs to the glycosyltransferase 51 family.</text>
</comment>
<proteinExistence type="inferred from homology"/>
<gene>
    <name evidence="1" type="primary">mtgA</name>
    <name type="ordered locus">AHA_2130</name>
</gene>
<accession>A0KK53</accession>
<organism>
    <name type="scientific">Aeromonas hydrophila subsp. hydrophila (strain ATCC 7966 / DSM 30187 / BCRC 13018 / CCUG 14551 / JCM 1027 / KCTC 2358 / NCIMB 9240 / NCTC 8049)</name>
    <dbReference type="NCBI Taxonomy" id="380703"/>
    <lineage>
        <taxon>Bacteria</taxon>
        <taxon>Pseudomonadati</taxon>
        <taxon>Pseudomonadota</taxon>
        <taxon>Gammaproteobacteria</taxon>
        <taxon>Aeromonadales</taxon>
        <taxon>Aeromonadaceae</taxon>
        <taxon>Aeromonas</taxon>
    </lineage>
</organism>